<protein>
    <recommendedName>
        <fullName>Probable pyridoxal 5'-phosphate synthase subunit SNZ3</fullName>
        <shortName>PLP synthase subunit SNZ3</shortName>
        <ecNumber>4.3.3.6</ecNumber>
    </recommendedName>
    <alternativeName>
        <fullName>PDX1 homolog 3</fullName>
        <shortName>Pdx1.3</shortName>
    </alternativeName>
</protein>
<dbReference type="EC" id="4.3.3.6"/>
<dbReference type="EMBL" id="D50617">
    <property type="protein sequence ID" value="BAA09182.1"/>
    <property type="molecule type" value="Genomic_DNA"/>
</dbReference>
<dbReference type="EMBL" id="BK006940">
    <property type="protein sequence ID" value="DAA12381.1"/>
    <property type="molecule type" value="Genomic_DNA"/>
</dbReference>
<dbReference type="PIR" id="S56196">
    <property type="entry name" value="S56196"/>
</dbReference>
<dbReference type="RefSeq" id="NP_116596.1">
    <property type="nucleotide sequence ID" value="NM_001179908.1"/>
</dbReference>
<dbReference type="SMR" id="P43545"/>
<dbReference type="BioGRID" id="31088">
    <property type="interactions" value="14"/>
</dbReference>
<dbReference type="DIP" id="DIP-1644N"/>
<dbReference type="FunCoup" id="P43545">
    <property type="interactions" value="257"/>
</dbReference>
<dbReference type="IntAct" id="P43545">
    <property type="interactions" value="12"/>
</dbReference>
<dbReference type="MINT" id="P43545"/>
<dbReference type="STRING" id="4932.YFL059W"/>
<dbReference type="iPTMnet" id="P43545"/>
<dbReference type="PaxDb" id="4932-YFL059W"/>
<dbReference type="PeptideAtlas" id="P43545"/>
<dbReference type="EnsemblFungi" id="YFL059W_mRNA">
    <property type="protein sequence ID" value="YFL059W"/>
    <property type="gene ID" value="YFL059W"/>
</dbReference>
<dbReference type="GeneID" id="850485"/>
<dbReference type="KEGG" id="sce:YFL059W"/>
<dbReference type="AGR" id="SGD:S000001835"/>
<dbReference type="SGD" id="S000001835">
    <property type="gene designation" value="SNZ3"/>
</dbReference>
<dbReference type="VEuPathDB" id="FungiDB:YFL059W"/>
<dbReference type="eggNOG" id="KOG1606">
    <property type="taxonomic scope" value="Eukaryota"/>
</dbReference>
<dbReference type="GeneTree" id="ENSGT00390000018460"/>
<dbReference type="HOGENOM" id="CLU_055352_1_0_1"/>
<dbReference type="InParanoid" id="P43545"/>
<dbReference type="OMA" id="RYANRGW"/>
<dbReference type="OrthoDB" id="1660966at2759"/>
<dbReference type="BioCyc" id="YEAST:G3O-30408-MONOMER"/>
<dbReference type="UniPathway" id="UPA00245"/>
<dbReference type="BioGRID-ORCS" id="850485">
    <property type="hits" value="0 hits in 10 CRISPR screens"/>
</dbReference>
<dbReference type="PRO" id="PR:P43545"/>
<dbReference type="Proteomes" id="UP000002311">
    <property type="component" value="Chromosome VI"/>
</dbReference>
<dbReference type="RNAct" id="P43545">
    <property type="molecule type" value="protein"/>
</dbReference>
<dbReference type="GO" id="GO:0016843">
    <property type="term" value="F:amine-lyase activity"/>
    <property type="evidence" value="ECO:0000318"/>
    <property type="project" value="GO_Central"/>
</dbReference>
<dbReference type="GO" id="GO:0036381">
    <property type="term" value="F:pyridoxal 5'-phosphate synthase (glutamine hydrolysing) activity"/>
    <property type="evidence" value="ECO:0000314"/>
    <property type="project" value="SGD"/>
</dbReference>
<dbReference type="GO" id="GO:0006520">
    <property type="term" value="P:amino acid metabolic process"/>
    <property type="evidence" value="ECO:0000318"/>
    <property type="project" value="GO_Central"/>
</dbReference>
<dbReference type="GO" id="GO:0042823">
    <property type="term" value="P:pyridoxal phosphate biosynthetic process"/>
    <property type="evidence" value="ECO:0000318"/>
    <property type="project" value="GO_Central"/>
</dbReference>
<dbReference type="GO" id="GO:0008615">
    <property type="term" value="P:pyridoxine biosynthetic process"/>
    <property type="evidence" value="ECO:0000316"/>
    <property type="project" value="SGD"/>
</dbReference>
<dbReference type="GO" id="GO:0009228">
    <property type="term" value="P:thiamine biosynthetic process"/>
    <property type="evidence" value="ECO:0000316"/>
    <property type="project" value="SGD"/>
</dbReference>
<dbReference type="CDD" id="cd04727">
    <property type="entry name" value="pdxS"/>
    <property type="match status" value="1"/>
</dbReference>
<dbReference type="FunFam" id="3.20.20.70:FF:000001">
    <property type="entry name" value="Pyridoxine biosynthesis protein PDX1"/>
    <property type="match status" value="1"/>
</dbReference>
<dbReference type="Gene3D" id="3.20.20.70">
    <property type="entry name" value="Aldolase class I"/>
    <property type="match status" value="1"/>
</dbReference>
<dbReference type="HAMAP" id="MF_01824">
    <property type="entry name" value="PdxS"/>
    <property type="match status" value="1"/>
</dbReference>
<dbReference type="InterPro" id="IPR013785">
    <property type="entry name" value="Aldolase_TIM"/>
</dbReference>
<dbReference type="InterPro" id="IPR001852">
    <property type="entry name" value="PdxS/SNZ"/>
</dbReference>
<dbReference type="InterPro" id="IPR033755">
    <property type="entry name" value="PdxS/SNZ_N"/>
</dbReference>
<dbReference type="InterPro" id="IPR011060">
    <property type="entry name" value="RibuloseP-bd_barrel"/>
</dbReference>
<dbReference type="NCBIfam" id="NF003215">
    <property type="entry name" value="PRK04180.1"/>
    <property type="match status" value="1"/>
</dbReference>
<dbReference type="NCBIfam" id="TIGR00343">
    <property type="entry name" value="pyridoxal 5'-phosphate synthase lyase subunit PdxS"/>
    <property type="match status" value="1"/>
</dbReference>
<dbReference type="PANTHER" id="PTHR31829">
    <property type="entry name" value="PYRIDOXAL 5'-PHOSPHATE SYNTHASE SUBUNIT SNZ1-RELATED"/>
    <property type="match status" value="1"/>
</dbReference>
<dbReference type="PANTHER" id="PTHR31829:SF0">
    <property type="entry name" value="PYRIDOXAL 5'-PHOSPHATE SYNTHASE SUBUNIT SNZ1-RELATED"/>
    <property type="match status" value="1"/>
</dbReference>
<dbReference type="Pfam" id="PF01680">
    <property type="entry name" value="SOR_SNZ"/>
    <property type="match status" value="1"/>
</dbReference>
<dbReference type="PIRSF" id="PIRSF029271">
    <property type="entry name" value="Pdx1"/>
    <property type="match status" value="1"/>
</dbReference>
<dbReference type="SUPFAM" id="SSF51366">
    <property type="entry name" value="Ribulose-phoshate binding barrel"/>
    <property type="match status" value="1"/>
</dbReference>
<dbReference type="PROSITE" id="PS01235">
    <property type="entry name" value="PDXS_SNZ_1"/>
    <property type="match status" value="1"/>
</dbReference>
<dbReference type="PROSITE" id="PS51129">
    <property type="entry name" value="PDXS_SNZ_2"/>
    <property type="match status" value="1"/>
</dbReference>
<organism>
    <name type="scientific">Saccharomyces cerevisiae (strain ATCC 204508 / S288c)</name>
    <name type="common">Baker's yeast</name>
    <dbReference type="NCBI Taxonomy" id="559292"/>
    <lineage>
        <taxon>Eukaryota</taxon>
        <taxon>Fungi</taxon>
        <taxon>Dikarya</taxon>
        <taxon>Ascomycota</taxon>
        <taxon>Saccharomycotina</taxon>
        <taxon>Saccharomycetes</taxon>
        <taxon>Saccharomycetales</taxon>
        <taxon>Saccharomycetaceae</taxon>
        <taxon>Saccharomyces</taxon>
    </lineage>
</organism>
<keyword id="KW-0456">Lyase</keyword>
<keyword id="KW-0663">Pyridoxal phosphate</keyword>
<keyword id="KW-1185">Reference proteome</keyword>
<keyword id="KW-0704">Schiff base</keyword>
<proteinExistence type="evidence at transcript level"/>
<accession>P43545</accession>
<accession>D6VTH1</accession>
<gene>
    <name type="primary">SNZ3</name>
    <name type="ordered locus">YFL059W</name>
</gene>
<reference key="1">
    <citation type="journal article" date="1995" name="Nat. Genet.">
        <title>Analysis of the nucleotide sequence of chromosome VI from Saccharomyces cerevisiae.</title>
        <authorList>
            <person name="Murakami Y."/>
            <person name="Naitou M."/>
            <person name="Hagiwara H."/>
            <person name="Shibata T."/>
            <person name="Ozawa M."/>
            <person name="Sasanuma S."/>
            <person name="Sasanuma M."/>
            <person name="Tsuchiya Y."/>
            <person name="Soeda E."/>
            <person name="Yokoyama K."/>
            <person name="Yamazaki M."/>
            <person name="Tashiro H."/>
            <person name="Eki T."/>
        </authorList>
    </citation>
    <scope>NUCLEOTIDE SEQUENCE [LARGE SCALE GENOMIC DNA]</scope>
    <source>
        <strain>ATCC 204508 / S288c</strain>
    </source>
</reference>
<reference key="2">
    <citation type="journal article" date="2014" name="G3 (Bethesda)">
        <title>The reference genome sequence of Saccharomyces cerevisiae: Then and now.</title>
        <authorList>
            <person name="Engel S.R."/>
            <person name="Dietrich F.S."/>
            <person name="Fisk D.G."/>
            <person name="Binkley G."/>
            <person name="Balakrishnan R."/>
            <person name="Costanzo M.C."/>
            <person name="Dwight S.S."/>
            <person name="Hitz B.C."/>
            <person name="Karra K."/>
            <person name="Nash R.S."/>
            <person name="Weng S."/>
            <person name="Wong E.D."/>
            <person name="Lloyd P."/>
            <person name="Skrzypek M.S."/>
            <person name="Miyasato S.R."/>
            <person name="Simison M."/>
            <person name="Cherry J.M."/>
        </authorList>
    </citation>
    <scope>GENOME REANNOTATION</scope>
    <source>
        <strain>ATCC 204508 / S288c</strain>
    </source>
</reference>
<reference key="3">
    <citation type="journal article" date="2002" name="Yeast">
        <title>Functional analysis of yeast gene families involved in metabolism of vitamins B1 and B6.</title>
        <authorList>
            <person name="Rodriguez-Navarro S."/>
            <person name="Llorente B."/>
            <person name="Rodriguez-Manzaneque M.T."/>
            <person name="Ramne A."/>
            <person name="Uber G."/>
            <person name="Marchesan D."/>
            <person name="Dujon B."/>
            <person name="Herrero E."/>
            <person name="Sunnerhagen P."/>
            <person name="Perez-Ortin J.E."/>
        </authorList>
    </citation>
    <scope>PROBABLE FUNCTION</scope>
    <scope>INDUCTION</scope>
</reference>
<sequence length="298" mass="32019">MSEFKVKTGLAQMLKGGVIMDVVTPEQAIIAERAGACAVMALERIPADMRKSGQVCRMSDPRMIKEIMEAVSIPVMAKVRIGHFVEAQILEELQVDYIDESEVLTPADWTHHIEKHNFKVPFVCGAKDLGEALRRINEGAAMIRTKGEAGTGDVSEAVKHITKIKAEIQQYKENLKTESDFAAKATELRVPVDLLKTTLSEGKLPVVNFAAGGVATPADAALLMQLGCEGVFVGSGIFKSSDPEKLACAIVEATTHYDNPAKLLQVSSDLGDLMGGISIQSINEAGGKNGARLSEIGW</sequence>
<feature type="chain" id="PRO_0000109360" description="Probable pyridoxal 5'-phosphate synthase subunit SNZ3">
    <location>
        <begin position="1"/>
        <end position="298"/>
    </location>
</feature>
<feature type="active site" description="Schiff-base intermediate with D-ribose 5-phosphate" evidence="1">
    <location>
        <position position="78"/>
    </location>
</feature>
<feature type="binding site" evidence="1">
    <location>
        <position position="21"/>
    </location>
    <ligand>
        <name>D-ribose 5-phosphate</name>
        <dbReference type="ChEBI" id="CHEBI:78346"/>
    </ligand>
</feature>
<feature type="binding site" evidence="1">
    <location>
        <position position="150"/>
    </location>
    <ligand>
        <name>D-ribose 5-phosphate</name>
        <dbReference type="ChEBI" id="CHEBI:78346"/>
    </ligand>
</feature>
<feature type="binding site" evidence="1">
    <location>
        <position position="213"/>
    </location>
    <ligand>
        <name>D-ribose 5-phosphate</name>
        <dbReference type="ChEBI" id="CHEBI:78346"/>
    </ligand>
</feature>
<feature type="binding site" evidence="1">
    <location>
        <begin position="234"/>
        <end position="235"/>
    </location>
    <ligand>
        <name>D-ribose 5-phosphate</name>
        <dbReference type="ChEBI" id="CHEBI:78346"/>
    </ligand>
</feature>
<comment type="function">
    <text evidence="2">Catalyzes the formation of pyridoxal 5'-phosphate from ribose 5-phosphate (RBP), glyceraldehyde 3-phosphate (G3P) and ammonia. The ammonia is provided by a SNO isoform. Can also use ribulose 5-phosphate and dihydroxyacetone phosphate as substrates, resulting from enzyme-catalyzed isomerization of RBP and G3P, respectively.</text>
</comment>
<comment type="catalytic activity">
    <reaction evidence="2">
        <text>aldehydo-D-ribose 5-phosphate + D-glyceraldehyde 3-phosphate + L-glutamine = pyridoxal 5'-phosphate + L-glutamate + phosphate + 3 H2O + H(+)</text>
        <dbReference type="Rhea" id="RHEA:31507"/>
        <dbReference type="ChEBI" id="CHEBI:15377"/>
        <dbReference type="ChEBI" id="CHEBI:15378"/>
        <dbReference type="ChEBI" id="CHEBI:29985"/>
        <dbReference type="ChEBI" id="CHEBI:43474"/>
        <dbReference type="ChEBI" id="CHEBI:58273"/>
        <dbReference type="ChEBI" id="CHEBI:58359"/>
        <dbReference type="ChEBI" id="CHEBI:59776"/>
        <dbReference type="ChEBI" id="CHEBI:597326"/>
        <dbReference type="EC" id="4.3.3.6"/>
    </reaction>
</comment>
<comment type="pathway">
    <text>Cofactor biosynthesis; pyridoxal 5'-phosphate biosynthesis.</text>
</comment>
<comment type="subunit">
    <text evidence="2 3">Homohexamer (By similarity). Interacts with THI11 (PubMed:12271461).</text>
</comment>
<comment type="induction">
    <text evidence="3">By the absence of external thiamine.</text>
</comment>
<comment type="similarity">
    <text evidence="4">Belongs to the PdxS/SNZ family.</text>
</comment>
<name>SNZ3_YEAST</name>
<evidence type="ECO:0000250" key="1">
    <source>
        <dbReference type="UniProtKB" id="O59080"/>
    </source>
</evidence>
<evidence type="ECO:0000250" key="2">
    <source>
        <dbReference type="UniProtKB" id="Q03148"/>
    </source>
</evidence>
<evidence type="ECO:0000269" key="3">
    <source>
    </source>
</evidence>
<evidence type="ECO:0000305" key="4"/>